<dbReference type="EC" id="2.7.7.3" evidence="1"/>
<dbReference type="EMBL" id="BX571857">
    <property type="protein sequence ID" value="CAG42833.1"/>
    <property type="molecule type" value="Genomic_DNA"/>
</dbReference>
<dbReference type="RefSeq" id="WP_000401377.1">
    <property type="nucleotide sequence ID" value="NC_002953.3"/>
</dbReference>
<dbReference type="SMR" id="Q6GA90"/>
<dbReference type="GeneID" id="98345441"/>
<dbReference type="KEGG" id="sas:SAS1059"/>
<dbReference type="HOGENOM" id="CLU_100149_0_1_9"/>
<dbReference type="UniPathway" id="UPA00241">
    <property type="reaction ID" value="UER00355"/>
</dbReference>
<dbReference type="GO" id="GO:0005737">
    <property type="term" value="C:cytoplasm"/>
    <property type="evidence" value="ECO:0007669"/>
    <property type="project" value="UniProtKB-SubCell"/>
</dbReference>
<dbReference type="GO" id="GO:0005524">
    <property type="term" value="F:ATP binding"/>
    <property type="evidence" value="ECO:0007669"/>
    <property type="project" value="UniProtKB-KW"/>
</dbReference>
<dbReference type="GO" id="GO:0004595">
    <property type="term" value="F:pantetheine-phosphate adenylyltransferase activity"/>
    <property type="evidence" value="ECO:0007669"/>
    <property type="project" value="UniProtKB-UniRule"/>
</dbReference>
<dbReference type="GO" id="GO:0015937">
    <property type="term" value="P:coenzyme A biosynthetic process"/>
    <property type="evidence" value="ECO:0007669"/>
    <property type="project" value="UniProtKB-UniRule"/>
</dbReference>
<dbReference type="CDD" id="cd02163">
    <property type="entry name" value="PPAT"/>
    <property type="match status" value="1"/>
</dbReference>
<dbReference type="Gene3D" id="3.40.50.620">
    <property type="entry name" value="HUPs"/>
    <property type="match status" value="1"/>
</dbReference>
<dbReference type="HAMAP" id="MF_00151">
    <property type="entry name" value="PPAT_bact"/>
    <property type="match status" value="1"/>
</dbReference>
<dbReference type="InterPro" id="IPR004821">
    <property type="entry name" value="Cyt_trans-like"/>
</dbReference>
<dbReference type="InterPro" id="IPR001980">
    <property type="entry name" value="PPAT"/>
</dbReference>
<dbReference type="InterPro" id="IPR014729">
    <property type="entry name" value="Rossmann-like_a/b/a_fold"/>
</dbReference>
<dbReference type="NCBIfam" id="TIGR01510">
    <property type="entry name" value="coaD_prev_kdtB"/>
    <property type="match status" value="1"/>
</dbReference>
<dbReference type="NCBIfam" id="TIGR00125">
    <property type="entry name" value="cyt_tran_rel"/>
    <property type="match status" value="1"/>
</dbReference>
<dbReference type="PANTHER" id="PTHR21342">
    <property type="entry name" value="PHOSPHOPANTETHEINE ADENYLYLTRANSFERASE"/>
    <property type="match status" value="1"/>
</dbReference>
<dbReference type="PANTHER" id="PTHR21342:SF1">
    <property type="entry name" value="PHOSPHOPANTETHEINE ADENYLYLTRANSFERASE"/>
    <property type="match status" value="1"/>
</dbReference>
<dbReference type="Pfam" id="PF01467">
    <property type="entry name" value="CTP_transf_like"/>
    <property type="match status" value="1"/>
</dbReference>
<dbReference type="PRINTS" id="PR01020">
    <property type="entry name" value="LPSBIOSNTHSS"/>
</dbReference>
<dbReference type="SUPFAM" id="SSF52374">
    <property type="entry name" value="Nucleotidylyl transferase"/>
    <property type="match status" value="1"/>
</dbReference>
<sequence>MEHTIAVIPGSFDPITYGHLDIIERSTDRFDEIHVCVLKNSKKEGTFSLEERMDLIEQSVKHLPNVKVHQFSGLLVDYCEQVGAKTIIRGLRAVSDFEYELRLTSMNKKLNNEIETLYMMSSTNYSFISSSIVKEVAAYRADISEFVPPYVEKALKKKFK</sequence>
<evidence type="ECO:0000255" key="1">
    <source>
        <dbReference type="HAMAP-Rule" id="MF_00151"/>
    </source>
</evidence>
<feature type="chain" id="PRO_0000156275" description="Phosphopantetheine adenylyltransferase">
    <location>
        <begin position="1"/>
        <end position="160"/>
    </location>
</feature>
<feature type="binding site" evidence="1">
    <location>
        <begin position="11"/>
        <end position="12"/>
    </location>
    <ligand>
        <name>ATP</name>
        <dbReference type="ChEBI" id="CHEBI:30616"/>
    </ligand>
</feature>
<feature type="binding site" evidence="1">
    <location>
        <position position="11"/>
    </location>
    <ligand>
        <name>substrate</name>
    </ligand>
</feature>
<feature type="binding site" evidence="1">
    <location>
        <position position="19"/>
    </location>
    <ligand>
        <name>ATP</name>
        <dbReference type="ChEBI" id="CHEBI:30616"/>
    </ligand>
</feature>
<feature type="binding site" evidence="1">
    <location>
        <position position="43"/>
    </location>
    <ligand>
        <name>substrate</name>
    </ligand>
</feature>
<feature type="binding site" evidence="1">
    <location>
        <position position="75"/>
    </location>
    <ligand>
        <name>substrate</name>
    </ligand>
</feature>
<feature type="binding site" evidence="1">
    <location>
        <position position="89"/>
    </location>
    <ligand>
        <name>substrate</name>
    </ligand>
</feature>
<feature type="binding site" evidence="1">
    <location>
        <begin position="90"/>
        <end position="92"/>
    </location>
    <ligand>
        <name>ATP</name>
        <dbReference type="ChEBI" id="CHEBI:30616"/>
    </ligand>
</feature>
<feature type="binding site" evidence="1">
    <location>
        <position position="100"/>
    </location>
    <ligand>
        <name>ATP</name>
        <dbReference type="ChEBI" id="CHEBI:30616"/>
    </ligand>
</feature>
<feature type="binding site" evidence="1">
    <location>
        <begin position="125"/>
        <end position="131"/>
    </location>
    <ligand>
        <name>ATP</name>
        <dbReference type="ChEBI" id="CHEBI:30616"/>
    </ligand>
</feature>
<feature type="site" description="Transition state stabilizer" evidence="1">
    <location>
        <position position="19"/>
    </location>
</feature>
<keyword id="KW-0067">ATP-binding</keyword>
<keyword id="KW-0173">Coenzyme A biosynthesis</keyword>
<keyword id="KW-0963">Cytoplasm</keyword>
<keyword id="KW-0460">Magnesium</keyword>
<keyword id="KW-0547">Nucleotide-binding</keyword>
<keyword id="KW-0548">Nucleotidyltransferase</keyword>
<keyword id="KW-0808">Transferase</keyword>
<comment type="function">
    <text evidence="1">Reversibly transfers an adenylyl group from ATP to 4'-phosphopantetheine, yielding dephospho-CoA (dPCoA) and pyrophosphate.</text>
</comment>
<comment type="catalytic activity">
    <reaction evidence="1">
        <text>(R)-4'-phosphopantetheine + ATP + H(+) = 3'-dephospho-CoA + diphosphate</text>
        <dbReference type="Rhea" id="RHEA:19801"/>
        <dbReference type="ChEBI" id="CHEBI:15378"/>
        <dbReference type="ChEBI" id="CHEBI:30616"/>
        <dbReference type="ChEBI" id="CHEBI:33019"/>
        <dbReference type="ChEBI" id="CHEBI:57328"/>
        <dbReference type="ChEBI" id="CHEBI:61723"/>
        <dbReference type="EC" id="2.7.7.3"/>
    </reaction>
</comment>
<comment type="cofactor">
    <cofactor evidence="1">
        <name>Mg(2+)</name>
        <dbReference type="ChEBI" id="CHEBI:18420"/>
    </cofactor>
</comment>
<comment type="pathway">
    <text evidence="1">Cofactor biosynthesis; coenzyme A biosynthesis; CoA from (R)-pantothenate: step 4/5.</text>
</comment>
<comment type="subunit">
    <text evidence="1">Homohexamer.</text>
</comment>
<comment type="subcellular location">
    <subcellularLocation>
        <location evidence="1">Cytoplasm</location>
    </subcellularLocation>
</comment>
<comment type="similarity">
    <text evidence="1">Belongs to the bacterial CoaD family.</text>
</comment>
<proteinExistence type="inferred from homology"/>
<accession>Q6GA90</accession>
<reference key="1">
    <citation type="journal article" date="2004" name="Proc. Natl. Acad. Sci. U.S.A.">
        <title>Complete genomes of two clinical Staphylococcus aureus strains: evidence for the rapid evolution of virulence and drug resistance.</title>
        <authorList>
            <person name="Holden M.T.G."/>
            <person name="Feil E.J."/>
            <person name="Lindsay J.A."/>
            <person name="Peacock S.J."/>
            <person name="Day N.P.J."/>
            <person name="Enright M.C."/>
            <person name="Foster T.J."/>
            <person name="Moore C.E."/>
            <person name="Hurst L."/>
            <person name="Atkin R."/>
            <person name="Barron A."/>
            <person name="Bason N."/>
            <person name="Bentley S.D."/>
            <person name="Chillingworth C."/>
            <person name="Chillingworth T."/>
            <person name="Churcher C."/>
            <person name="Clark L."/>
            <person name="Corton C."/>
            <person name="Cronin A."/>
            <person name="Doggett J."/>
            <person name="Dowd L."/>
            <person name="Feltwell T."/>
            <person name="Hance Z."/>
            <person name="Harris B."/>
            <person name="Hauser H."/>
            <person name="Holroyd S."/>
            <person name="Jagels K."/>
            <person name="James K.D."/>
            <person name="Lennard N."/>
            <person name="Line A."/>
            <person name="Mayes R."/>
            <person name="Moule S."/>
            <person name="Mungall K."/>
            <person name="Ormond D."/>
            <person name="Quail M.A."/>
            <person name="Rabbinowitsch E."/>
            <person name="Rutherford K.M."/>
            <person name="Sanders M."/>
            <person name="Sharp S."/>
            <person name="Simmonds M."/>
            <person name="Stevens K."/>
            <person name="Whitehead S."/>
            <person name="Barrell B.G."/>
            <person name="Spratt B.G."/>
            <person name="Parkhill J."/>
        </authorList>
    </citation>
    <scope>NUCLEOTIDE SEQUENCE [LARGE SCALE GENOMIC DNA]</scope>
    <source>
        <strain>MSSA476</strain>
    </source>
</reference>
<protein>
    <recommendedName>
        <fullName evidence="1">Phosphopantetheine adenylyltransferase</fullName>
        <ecNumber evidence="1">2.7.7.3</ecNumber>
    </recommendedName>
    <alternativeName>
        <fullName evidence="1">Dephospho-CoA pyrophosphorylase</fullName>
    </alternativeName>
    <alternativeName>
        <fullName evidence="1">Pantetheine-phosphate adenylyltransferase</fullName>
        <shortName evidence="1">PPAT</shortName>
    </alternativeName>
</protein>
<name>COAD_STAAS</name>
<organism>
    <name type="scientific">Staphylococcus aureus (strain MSSA476)</name>
    <dbReference type="NCBI Taxonomy" id="282459"/>
    <lineage>
        <taxon>Bacteria</taxon>
        <taxon>Bacillati</taxon>
        <taxon>Bacillota</taxon>
        <taxon>Bacilli</taxon>
        <taxon>Bacillales</taxon>
        <taxon>Staphylococcaceae</taxon>
        <taxon>Staphylococcus</taxon>
    </lineage>
</organism>
<gene>
    <name evidence="1" type="primary">coaD</name>
    <name type="ordered locus">SAS1059</name>
</gene>